<protein>
    <recommendedName>
        <fullName>Transcription elongation regulator 1-like protein</fullName>
    </recommendedName>
</protein>
<accession>Q5VWI1</accession>
<accession>Q5VWI2</accession>
<accession>Q86XM8</accession>
<comment type="sequence caution" evidence="5">
    <conflict type="erroneous initiation">
        <sequence resource="EMBL-CDS" id="AAH42951"/>
    </conflict>
</comment>
<comment type="sequence caution" evidence="5">
    <conflict type="erroneous initiation">
        <sequence resource="EMBL-CDS" id="AAH93639"/>
    </conflict>
</comment>
<comment type="sequence caution" evidence="5">
    <conflict type="erroneous initiation">
        <sequence resource="EMBL-CDS" id="AAI01536"/>
    </conflict>
</comment>
<dbReference type="EMBL" id="AC067746">
    <property type="status" value="NOT_ANNOTATED_CDS"/>
    <property type="molecule type" value="Genomic_DNA"/>
</dbReference>
<dbReference type="EMBL" id="AL390203">
    <property type="status" value="NOT_ANNOTATED_CDS"/>
    <property type="molecule type" value="Genomic_DNA"/>
</dbReference>
<dbReference type="EMBL" id="BC042951">
    <property type="protein sequence ID" value="AAH42951.1"/>
    <property type="status" value="ALT_INIT"/>
    <property type="molecule type" value="mRNA"/>
</dbReference>
<dbReference type="EMBL" id="BC093639">
    <property type="protein sequence ID" value="AAH93639.1"/>
    <property type="status" value="ALT_INIT"/>
    <property type="molecule type" value="mRNA"/>
</dbReference>
<dbReference type="EMBL" id="BC101535">
    <property type="protein sequence ID" value="AAI01536.1"/>
    <property type="status" value="ALT_INIT"/>
    <property type="molecule type" value="mRNA"/>
</dbReference>
<dbReference type="CCDS" id="CCDS7662.2"/>
<dbReference type="RefSeq" id="NP_777597.2">
    <property type="nucleotide sequence ID" value="NM_174937.4"/>
</dbReference>
<dbReference type="SMR" id="Q5VWI1"/>
<dbReference type="BioGRID" id="129171">
    <property type="interactions" value="2"/>
</dbReference>
<dbReference type="FunCoup" id="Q5VWI1">
    <property type="interactions" value="565"/>
</dbReference>
<dbReference type="STRING" id="9606.ENSP00000357631"/>
<dbReference type="GlyGen" id="Q5VWI1">
    <property type="glycosylation" value="2 sites, 1 O-linked glycan (2 sites)"/>
</dbReference>
<dbReference type="iPTMnet" id="Q5VWI1"/>
<dbReference type="PhosphoSitePlus" id="Q5VWI1"/>
<dbReference type="BioMuta" id="TCERG1L"/>
<dbReference type="DMDM" id="172045963"/>
<dbReference type="jPOST" id="Q5VWI1"/>
<dbReference type="MassIVE" id="Q5VWI1"/>
<dbReference type="PaxDb" id="9606-ENSP00000357631"/>
<dbReference type="PeptideAtlas" id="Q5VWI1"/>
<dbReference type="ProteomicsDB" id="65529"/>
<dbReference type="Antibodypedia" id="32526">
    <property type="antibodies" value="77 antibodies from 16 providers"/>
</dbReference>
<dbReference type="DNASU" id="256536"/>
<dbReference type="Ensembl" id="ENST00000368642.4">
    <property type="protein sequence ID" value="ENSP00000357631.4"/>
    <property type="gene ID" value="ENSG00000176769.9"/>
</dbReference>
<dbReference type="GeneID" id="256536"/>
<dbReference type="KEGG" id="hsa:256536"/>
<dbReference type="MANE-Select" id="ENST00000368642.4">
    <property type="protein sequence ID" value="ENSP00000357631.4"/>
    <property type="RefSeq nucleotide sequence ID" value="NM_174937.4"/>
    <property type="RefSeq protein sequence ID" value="NP_777597.2"/>
</dbReference>
<dbReference type="UCSC" id="uc001lkp.4">
    <property type="organism name" value="human"/>
</dbReference>
<dbReference type="AGR" id="HGNC:23533"/>
<dbReference type="CTD" id="256536"/>
<dbReference type="DisGeNET" id="256536"/>
<dbReference type="GeneCards" id="TCERG1L"/>
<dbReference type="HGNC" id="HGNC:23533">
    <property type="gene designation" value="TCERG1L"/>
</dbReference>
<dbReference type="HPA" id="ENSG00000176769">
    <property type="expression patterns" value="Tissue enhanced (brain, retina, thyroid gland)"/>
</dbReference>
<dbReference type="MIM" id="620498">
    <property type="type" value="gene"/>
</dbReference>
<dbReference type="neXtProt" id="NX_Q5VWI1"/>
<dbReference type="OpenTargets" id="ENSG00000176769"/>
<dbReference type="PharmGKB" id="PA134864258"/>
<dbReference type="VEuPathDB" id="HostDB:ENSG00000176769"/>
<dbReference type="eggNOG" id="KOG0155">
    <property type="taxonomic scope" value="Eukaryota"/>
</dbReference>
<dbReference type="GeneTree" id="ENSGT00940000160593"/>
<dbReference type="HOGENOM" id="CLU_039298_0_0_1"/>
<dbReference type="InParanoid" id="Q5VWI1"/>
<dbReference type="OMA" id="RLFHGYE"/>
<dbReference type="OrthoDB" id="63972at2759"/>
<dbReference type="PAN-GO" id="Q5VWI1">
    <property type="GO annotations" value="3 GO annotations based on evolutionary models"/>
</dbReference>
<dbReference type="PhylomeDB" id="Q5VWI1"/>
<dbReference type="TreeFam" id="TF317748"/>
<dbReference type="PathwayCommons" id="Q5VWI1"/>
<dbReference type="BioGRID-ORCS" id="256536">
    <property type="hits" value="13 hits in 1146 CRISPR screens"/>
</dbReference>
<dbReference type="ChiTaRS" id="TCERG1L">
    <property type="organism name" value="human"/>
</dbReference>
<dbReference type="GenomeRNAi" id="256536"/>
<dbReference type="Pharos" id="Q5VWI1">
    <property type="development level" value="Tbio"/>
</dbReference>
<dbReference type="PRO" id="PR:Q5VWI1"/>
<dbReference type="Proteomes" id="UP000005640">
    <property type="component" value="Chromosome 10"/>
</dbReference>
<dbReference type="RNAct" id="Q5VWI1">
    <property type="molecule type" value="protein"/>
</dbReference>
<dbReference type="Bgee" id="ENSG00000176769">
    <property type="expression patterns" value="Expressed in right lobe of thyroid gland and 76 other cell types or tissues"/>
</dbReference>
<dbReference type="GO" id="GO:0005634">
    <property type="term" value="C:nucleus"/>
    <property type="evidence" value="ECO:0000318"/>
    <property type="project" value="GO_Central"/>
</dbReference>
<dbReference type="GO" id="GO:0070063">
    <property type="term" value="F:RNA polymerase binding"/>
    <property type="evidence" value="ECO:0000318"/>
    <property type="project" value="GO_Central"/>
</dbReference>
<dbReference type="GO" id="GO:0003712">
    <property type="term" value="F:transcription coregulator activity"/>
    <property type="evidence" value="ECO:0000318"/>
    <property type="project" value="GO_Central"/>
</dbReference>
<dbReference type="CDD" id="cd00201">
    <property type="entry name" value="WW"/>
    <property type="match status" value="1"/>
</dbReference>
<dbReference type="FunFam" id="1.10.10.440:FF:000001">
    <property type="entry name" value="Transcription elongation regulator 1 like"/>
    <property type="match status" value="1"/>
</dbReference>
<dbReference type="FunFam" id="1.10.10.440:FF:000004">
    <property type="entry name" value="Transcription elongation regulator 1 like"/>
    <property type="match status" value="1"/>
</dbReference>
<dbReference type="FunFam" id="2.20.70.10:FF:000049">
    <property type="entry name" value="Transcription elongation regulator 1-like"/>
    <property type="match status" value="1"/>
</dbReference>
<dbReference type="Gene3D" id="2.20.70.10">
    <property type="match status" value="1"/>
</dbReference>
<dbReference type="Gene3D" id="1.10.10.440">
    <property type="entry name" value="FF domain"/>
    <property type="match status" value="2"/>
</dbReference>
<dbReference type="InterPro" id="IPR002713">
    <property type="entry name" value="FF_domain"/>
</dbReference>
<dbReference type="InterPro" id="IPR036517">
    <property type="entry name" value="FF_domain_sf"/>
</dbReference>
<dbReference type="InterPro" id="IPR045148">
    <property type="entry name" value="TCRG1-like"/>
</dbReference>
<dbReference type="InterPro" id="IPR001202">
    <property type="entry name" value="WW_dom"/>
</dbReference>
<dbReference type="InterPro" id="IPR036020">
    <property type="entry name" value="WW_dom_sf"/>
</dbReference>
<dbReference type="PANTHER" id="PTHR15377">
    <property type="entry name" value="TRANSCRIPTION ELONGATION REGULATOR 1"/>
    <property type="match status" value="1"/>
</dbReference>
<dbReference type="PANTHER" id="PTHR15377:SF5">
    <property type="entry name" value="TRANSCRIPTION ELONGATION REGULATOR 1-LIKE PROTEIN"/>
    <property type="match status" value="1"/>
</dbReference>
<dbReference type="Pfam" id="PF01846">
    <property type="entry name" value="FF"/>
    <property type="match status" value="2"/>
</dbReference>
<dbReference type="Pfam" id="PF23517">
    <property type="entry name" value="WW_TCERG1"/>
    <property type="match status" value="1"/>
</dbReference>
<dbReference type="SMART" id="SM00441">
    <property type="entry name" value="FF"/>
    <property type="match status" value="2"/>
</dbReference>
<dbReference type="SMART" id="SM00456">
    <property type="entry name" value="WW"/>
    <property type="match status" value="1"/>
</dbReference>
<dbReference type="SUPFAM" id="SSF81698">
    <property type="entry name" value="FF domain"/>
    <property type="match status" value="2"/>
</dbReference>
<dbReference type="SUPFAM" id="SSF51045">
    <property type="entry name" value="WW domain"/>
    <property type="match status" value="1"/>
</dbReference>
<dbReference type="PROSITE" id="PS51676">
    <property type="entry name" value="FF"/>
    <property type="match status" value="2"/>
</dbReference>
<dbReference type="PROSITE" id="PS01159">
    <property type="entry name" value="WW_DOMAIN_1"/>
    <property type="match status" value="1"/>
</dbReference>
<dbReference type="PROSITE" id="PS50020">
    <property type="entry name" value="WW_DOMAIN_2"/>
    <property type="match status" value="1"/>
</dbReference>
<feature type="chain" id="PRO_0000312872" description="Transcription elongation regulator 1-like protein">
    <location>
        <begin position="1"/>
        <end position="586"/>
    </location>
</feature>
<feature type="domain" description="WW 1" evidence="1">
    <location>
        <begin position="148"/>
        <end position="181"/>
    </location>
</feature>
<feature type="domain" description="WW 2" evidence="1">
    <location>
        <begin position="339"/>
        <end position="372"/>
    </location>
</feature>
<feature type="domain" description="FF 1">
    <location>
        <begin position="450"/>
        <end position="503"/>
    </location>
</feature>
<feature type="domain" description="FF 2">
    <location>
        <begin position="515"/>
        <end position="570"/>
    </location>
</feature>
<feature type="region of interest" description="Disordered" evidence="2">
    <location>
        <begin position="1"/>
        <end position="30"/>
    </location>
</feature>
<feature type="region of interest" description="Disordered" evidence="2">
    <location>
        <begin position="281"/>
        <end position="344"/>
    </location>
</feature>
<feature type="region of interest" description="Disordered" evidence="2">
    <location>
        <begin position="378"/>
        <end position="448"/>
    </location>
</feature>
<feature type="compositionally biased region" description="Basic residues" evidence="2">
    <location>
        <begin position="7"/>
        <end position="23"/>
    </location>
</feature>
<feature type="compositionally biased region" description="Basic and acidic residues" evidence="2">
    <location>
        <begin position="306"/>
        <end position="317"/>
    </location>
</feature>
<feature type="compositionally biased region" description="Basic and acidic residues" evidence="2">
    <location>
        <begin position="378"/>
        <end position="387"/>
    </location>
</feature>
<feature type="compositionally biased region" description="Basic and acidic residues" evidence="2">
    <location>
        <begin position="411"/>
        <end position="421"/>
    </location>
</feature>
<feature type="compositionally biased region" description="Basic and acidic residues" evidence="2">
    <location>
        <begin position="428"/>
        <end position="439"/>
    </location>
</feature>
<feature type="sequence variant" id="VAR_037601" description="In dbSNP:rs17857275." evidence="3">
    <original>P</original>
    <variation>Q</variation>
    <location>
        <position position="339"/>
    </location>
</feature>
<feature type="sequence variant" id="VAR_037602" description="In a colorectal cancer sample; somatic mutation; dbSNP:rs1480561756." evidence="4">
    <original>K</original>
    <variation>T</variation>
    <location>
        <position position="437"/>
    </location>
</feature>
<feature type="sequence variant" id="VAR_037603" description="In dbSNP:rs17857276." evidence="3">
    <original>E</original>
    <variation>K</variation>
    <location>
        <position position="529"/>
    </location>
</feature>
<feature type="sequence variant" id="VAR_037604" description="In dbSNP:rs17854242." evidence="3">
    <original>Q</original>
    <variation>K</variation>
    <location>
        <position position="566"/>
    </location>
</feature>
<feature type="sequence conflict" description="In Ref. 2; AAH93639." evidence="5" ref="2">
    <original>Q</original>
    <variation>R</variation>
    <location>
        <position position="23"/>
    </location>
</feature>
<keyword id="KW-1267">Proteomics identification</keyword>
<keyword id="KW-1185">Reference proteome</keyword>
<keyword id="KW-0677">Repeat</keyword>
<gene>
    <name type="primary">TCERG1L</name>
</gene>
<reference key="1">
    <citation type="journal article" date="2004" name="Nature">
        <title>The DNA sequence and comparative analysis of human chromosome 10.</title>
        <authorList>
            <person name="Deloukas P."/>
            <person name="Earthrowl M.E."/>
            <person name="Grafham D.V."/>
            <person name="Rubenfield M."/>
            <person name="French L."/>
            <person name="Steward C.A."/>
            <person name="Sims S.K."/>
            <person name="Jones M.C."/>
            <person name="Searle S."/>
            <person name="Scott C."/>
            <person name="Howe K."/>
            <person name="Hunt S.E."/>
            <person name="Andrews T.D."/>
            <person name="Gilbert J.G.R."/>
            <person name="Swarbreck D."/>
            <person name="Ashurst J.L."/>
            <person name="Taylor A."/>
            <person name="Battles J."/>
            <person name="Bird C.P."/>
            <person name="Ainscough R."/>
            <person name="Almeida J.P."/>
            <person name="Ashwell R.I.S."/>
            <person name="Ambrose K.D."/>
            <person name="Babbage A.K."/>
            <person name="Bagguley C.L."/>
            <person name="Bailey J."/>
            <person name="Banerjee R."/>
            <person name="Bates K."/>
            <person name="Beasley H."/>
            <person name="Bray-Allen S."/>
            <person name="Brown A.J."/>
            <person name="Brown J.Y."/>
            <person name="Burford D.C."/>
            <person name="Burrill W."/>
            <person name="Burton J."/>
            <person name="Cahill P."/>
            <person name="Camire D."/>
            <person name="Carter N.P."/>
            <person name="Chapman J.C."/>
            <person name="Clark S.Y."/>
            <person name="Clarke G."/>
            <person name="Clee C.M."/>
            <person name="Clegg S."/>
            <person name="Corby N."/>
            <person name="Coulson A."/>
            <person name="Dhami P."/>
            <person name="Dutta I."/>
            <person name="Dunn M."/>
            <person name="Faulkner L."/>
            <person name="Frankish A."/>
            <person name="Frankland J.A."/>
            <person name="Garner P."/>
            <person name="Garnett J."/>
            <person name="Gribble S."/>
            <person name="Griffiths C."/>
            <person name="Grocock R."/>
            <person name="Gustafson E."/>
            <person name="Hammond S."/>
            <person name="Harley J.L."/>
            <person name="Hart E."/>
            <person name="Heath P.D."/>
            <person name="Ho T.P."/>
            <person name="Hopkins B."/>
            <person name="Horne J."/>
            <person name="Howden P.J."/>
            <person name="Huckle E."/>
            <person name="Hynds C."/>
            <person name="Johnson C."/>
            <person name="Johnson D."/>
            <person name="Kana A."/>
            <person name="Kay M."/>
            <person name="Kimberley A.M."/>
            <person name="Kershaw J.K."/>
            <person name="Kokkinaki M."/>
            <person name="Laird G.K."/>
            <person name="Lawlor S."/>
            <person name="Lee H.M."/>
            <person name="Leongamornlert D.A."/>
            <person name="Laird G."/>
            <person name="Lloyd C."/>
            <person name="Lloyd D.M."/>
            <person name="Loveland J."/>
            <person name="Lovell J."/>
            <person name="McLaren S."/>
            <person name="McLay K.E."/>
            <person name="McMurray A."/>
            <person name="Mashreghi-Mohammadi M."/>
            <person name="Matthews L."/>
            <person name="Milne S."/>
            <person name="Nickerson T."/>
            <person name="Nguyen M."/>
            <person name="Overton-Larty E."/>
            <person name="Palmer S.A."/>
            <person name="Pearce A.V."/>
            <person name="Peck A.I."/>
            <person name="Pelan S."/>
            <person name="Phillimore B."/>
            <person name="Porter K."/>
            <person name="Rice C.M."/>
            <person name="Rogosin A."/>
            <person name="Ross M.T."/>
            <person name="Sarafidou T."/>
            <person name="Sehra H.K."/>
            <person name="Shownkeen R."/>
            <person name="Skuce C.D."/>
            <person name="Smith M."/>
            <person name="Standring L."/>
            <person name="Sycamore N."/>
            <person name="Tester J."/>
            <person name="Thorpe A."/>
            <person name="Torcasso W."/>
            <person name="Tracey A."/>
            <person name="Tromans A."/>
            <person name="Tsolas J."/>
            <person name="Wall M."/>
            <person name="Walsh J."/>
            <person name="Wang H."/>
            <person name="Weinstock K."/>
            <person name="West A.P."/>
            <person name="Willey D.L."/>
            <person name="Whitehead S.L."/>
            <person name="Wilming L."/>
            <person name="Wray P.W."/>
            <person name="Young L."/>
            <person name="Chen Y."/>
            <person name="Lovering R.C."/>
            <person name="Moschonas N.K."/>
            <person name="Siebert R."/>
            <person name="Fechtel K."/>
            <person name="Bentley D."/>
            <person name="Durbin R.M."/>
            <person name="Hubbard T."/>
            <person name="Doucette-Stamm L."/>
            <person name="Beck S."/>
            <person name="Smith D.R."/>
            <person name="Rogers J."/>
        </authorList>
    </citation>
    <scope>NUCLEOTIDE SEQUENCE [LARGE SCALE GENOMIC DNA]</scope>
</reference>
<reference key="2">
    <citation type="journal article" date="2004" name="Genome Res.">
        <title>The status, quality, and expansion of the NIH full-length cDNA project: the Mammalian Gene Collection (MGC).</title>
        <authorList>
            <consortium name="The MGC Project Team"/>
        </authorList>
    </citation>
    <scope>NUCLEOTIDE SEQUENCE [LARGE SCALE MRNA]</scope>
    <scope>VARIANTS GLN-339; LYS-529 AND LYS-566</scope>
    <source>
        <tissue>Brain cortex</tissue>
        <tissue>Hippocampus</tissue>
    </source>
</reference>
<reference key="3">
    <citation type="journal article" date="2006" name="Science">
        <title>The consensus coding sequences of human breast and colorectal cancers.</title>
        <authorList>
            <person name="Sjoeblom T."/>
            <person name="Jones S."/>
            <person name="Wood L.D."/>
            <person name="Parsons D.W."/>
            <person name="Lin J."/>
            <person name="Barber T.D."/>
            <person name="Mandelker D."/>
            <person name="Leary R.J."/>
            <person name="Ptak J."/>
            <person name="Silliman N."/>
            <person name="Szabo S."/>
            <person name="Buckhaults P."/>
            <person name="Farrell C."/>
            <person name="Meeh P."/>
            <person name="Markowitz S.D."/>
            <person name="Willis J."/>
            <person name="Dawson D."/>
            <person name="Willson J.K.V."/>
            <person name="Gazdar A.F."/>
            <person name="Hartigan J."/>
            <person name="Wu L."/>
            <person name="Liu C."/>
            <person name="Parmigiani G."/>
            <person name="Park B.H."/>
            <person name="Bachman K.E."/>
            <person name="Papadopoulos N."/>
            <person name="Vogelstein B."/>
            <person name="Kinzler K.W."/>
            <person name="Velculescu V.E."/>
        </authorList>
    </citation>
    <scope>VARIANT [LARGE SCALE ANALYSIS] THR-437</scope>
</reference>
<organism>
    <name type="scientific">Homo sapiens</name>
    <name type="common">Human</name>
    <dbReference type="NCBI Taxonomy" id="9606"/>
    <lineage>
        <taxon>Eukaryota</taxon>
        <taxon>Metazoa</taxon>
        <taxon>Chordata</taxon>
        <taxon>Craniata</taxon>
        <taxon>Vertebrata</taxon>
        <taxon>Euteleostomi</taxon>
        <taxon>Mammalia</taxon>
        <taxon>Eutheria</taxon>
        <taxon>Euarchontoglires</taxon>
        <taxon>Primates</taxon>
        <taxon>Haplorrhini</taxon>
        <taxon>Catarrhini</taxon>
        <taxon>Hominidae</taxon>
        <taxon>Homo</taxon>
    </lineage>
</organism>
<evidence type="ECO:0000255" key="1">
    <source>
        <dbReference type="PROSITE-ProRule" id="PRU00224"/>
    </source>
</evidence>
<evidence type="ECO:0000256" key="2">
    <source>
        <dbReference type="SAM" id="MobiDB-lite"/>
    </source>
</evidence>
<evidence type="ECO:0000269" key="3">
    <source>
    </source>
</evidence>
<evidence type="ECO:0000269" key="4">
    <source>
    </source>
</evidence>
<evidence type="ECO:0000305" key="5"/>
<proteinExistence type="evidence at protein level"/>
<name>TCRGL_HUMAN</name>
<sequence length="586" mass="65660">MQAGARFQRRRRQLQQQQPRRRQPLLWPMDAEPPPPPPWVWMVPGSAGLLRLSAGVVVPPVLLASAPPPAAPLLPGLPGWPAPSEPVLPLLPLPSAPDSAAAAAAHPFPALHGQWLFGGHSPSLGLPPSSTVELVPVFPHLCPSALATPIGKSWIDKRIPNCKIFFNNSFALDSTWIHPEESRFFHGHEKPRLLANQVAVSLSRPAPASRPLPTVVLAPQPIPGGCHNSLKVTSSPAIAIATAAAAAMVSVDPENLRGPSPSSVQPRHFLTLAPIKIPLRTSPVSDTRTERGRVARPPALMLRAQKSRDGDKEDKEPPPMLGGGEDSTARGNRPVASTPVPGSPWCVVWTGDDRVFFFNPTMHLSVWEKPMDLKDRGDLNRIIEDPPHKRKLEAPATDNSDGSSSEDNREDQDVKTKRNRTEGCGSPKPEEAKREDKGTRTPPPQILLPLEERVTHFRDMLLERGVSAFSTWEKELHKIVFDPRYLLLNSEERKQIFEQFVKTRIKEEYKEKKSKLLLAKEEFKKLLEESKVSPRTTFKEFAEKYGRDQRFRLVQKRKDQEHFFNQFILILKKRDKENRLRLRKMR</sequence>